<comment type="function">
    <text evidence="3 4">Integral part of a neural sensory system in the antenna that provides the neural basis for the response to environmental changes in humidity (hygrosensation) (PubMed:27161501, PubMed:27656904). Together with Ir25a and Ir93a, mediates the response of the hygrosensory sacculus neurons to changes in relative humidity and is required for dry detection behavior (PubMed:27161501, PubMed:27656904).</text>
</comment>
<comment type="subcellular location">
    <subcellularLocation>
        <location evidence="6">Cell membrane</location>
        <topology evidence="1">Multi-pass membrane protein</topology>
    </subcellularLocation>
</comment>
<comment type="tissue specificity">
    <text evidence="4">In the antenna, detected in sacculus neurons which innervate the first and second chambers (at protein level).</text>
</comment>
<comment type="disruption phenotype">
    <text evidence="3 4">Response of sacculus neurons to changes in humidity is abolished and consequently larvae fail to move towards their preferred humidity.</text>
</comment>
<comment type="similarity">
    <text evidence="6">Belongs to the glutamate-gated ion channel (TC 1.A.10.1) family.</text>
</comment>
<keyword id="KW-0085">Behavior</keyword>
<keyword id="KW-1003">Cell membrane</keyword>
<keyword id="KW-0325">Glycoprotein</keyword>
<keyword id="KW-0407">Ion channel</keyword>
<keyword id="KW-0406">Ion transport</keyword>
<keyword id="KW-1071">Ligand-gated ion channel</keyword>
<keyword id="KW-0472">Membrane</keyword>
<keyword id="KW-0675">Receptor</keyword>
<keyword id="KW-1185">Reference proteome</keyword>
<keyword id="KW-0716">Sensory transduction</keyword>
<keyword id="KW-0732">Signal</keyword>
<keyword id="KW-0812">Transmembrane</keyword>
<keyword id="KW-1133">Transmembrane helix</keyword>
<keyword id="KW-0813">Transport</keyword>
<gene>
    <name evidence="5 8" type="primary">Ir40a</name>
    <name evidence="8" type="ORF">CG42352</name>
</gene>
<dbReference type="EMBL" id="AE014134">
    <property type="protein sequence ID" value="AAF57255.4"/>
    <property type="molecule type" value="Genomic_DNA"/>
</dbReference>
<dbReference type="EMBL" id="BT032988">
    <property type="protein sequence ID" value="ACD99552.1"/>
    <property type="molecule type" value="mRNA"/>
</dbReference>
<dbReference type="RefSeq" id="NP_610140.4">
    <property type="nucleotide sequence ID" value="NM_136296.4"/>
</dbReference>
<dbReference type="FunCoup" id="Q9V9N1">
    <property type="interactions" value="24"/>
</dbReference>
<dbReference type="STRING" id="7227.FBpp0307914"/>
<dbReference type="GlyCosmos" id="Q9V9N1">
    <property type="glycosylation" value="4 sites, No reported glycans"/>
</dbReference>
<dbReference type="GlyGen" id="Q9V9N1">
    <property type="glycosylation" value="4 sites"/>
</dbReference>
<dbReference type="PaxDb" id="7227-FBpp0290308"/>
<dbReference type="EnsemblMetazoa" id="FBtr0336971">
    <property type="protein sequence ID" value="FBpp0307914"/>
    <property type="gene ID" value="FBgn0259683"/>
</dbReference>
<dbReference type="GeneID" id="35449"/>
<dbReference type="KEGG" id="dme:Dmel_CG42352"/>
<dbReference type="UCSC" id="CG42352-RC">
    <property type="organism name" value="d. melanogaster"/>
</dbReference>
<dbReference type="AGR" id="FB:FBgn0259683"/>
<dbReference type="CTD" id="35449"/>
<dbReference type="FlyBase" id="FBgn0259683">
    <property type="gene designation" value="Ir40a"/>
</dbReference>
<dbReference type="VEuPathDB" id="VectorBase:FBgn0259683"/>
<dbReference type="eggNOG" id="KOG2510">
    <property type="taxonomic scope" value="Eukaryota"/>
</dbReference>
<dbReference type="GeneTree" id="ENSGT00940000176554"/>
<dbReference type="HOGENOM" id="CLU_020832_0_0_1"/>
<dbReference type="InParanoid" id="Q9V9N1"/>
<dbReference type="OMA" id="YWVAATY"/>
<dbReference type="OrthoDB" id="5984008at2759"/>
<dbReference type="BioGRID-ORCS" id="35449">
    <property type="hits" value="0 hits in 1 CRISPR screen"/>
</dbReference>
<dbReference type="GenomeRNAi" id="35449"/>
<dbReference type="PRO" id="PR:Q9V9N1"/>
<dbReference type="Proteomes" id="UP000000803">
    <property type="component" value="Chromosome 2L"/>
</dbReference>
<dbReference type="Bgee" id="FBgn0259683">
    <property type="expression patterns" value="Expressed in neuron of aristal sensillum (Drosophila) in antenna and 10 other cell types or tissues"/>
</dbReference>
<dbReference type="ExpressionAtlas" id="Q9V9N1">
    <property type="expression patterns" value="baseline and differential"/>
</dbReference>
<dbReference type="GO" id="GO:0016020">
    <property type="term" value="C:membrane"/>
    <property type="evidence" value="ECO:0000255"/>
    <property type="project" value="FlyBase"/>
</dbReference>
<dbReference type="GO" id="GO:0005886">
    <property type="term" value="C:plasma membrane"/>
    <property type="evidence" value="ECO:0007669"/>
    <property type="project" value="UniProtKB-SubCell"/>
</dbReference>
<dbReference type="GO" id="GO:0015276">
    <property type="term" value="F:ligand-gated monoatomic ion channel activity"/>
    <property type="evidence" value="ECO:0000255"/>
    <property type="project" value="FlyBase"/>
</dbReference>
<dbReference type="GO" id="GO:0050907">
    <property type="term" value="P:detection of chemical stimulus involved in sensory perception"/>
    <property type="evidence" value="ECO:0000270"/>
    <property type="project" value="FlyBase"/>
</dbReference>
<dbReference type="FunFam" id="1.10.287.70:FF:000283">
    <property type="entry name" value="Ionotropic receptor 40a"/>
    <property type="match status" value="1"/>
</dbReference>
<dbReference type="FunFam" id="3.40.190.10:FF:000449">
    <property type="entry name" value="Ionotropic receptor 40a"/>
    <property type="match status" value="1"/>
</dbReference>
<dbReference type="Gene3D" id="1.10.287.70">
    <property type="match status" value="1"/>
</dbReference>
<dbReference type="Gene3D" id="3.40.190.10">
    <property type="entry name" value="Periplasmic binding protein-like II"/>
    <property type="match status" value="1"/>
</dbReference>
<dbReference type="InterPro" id="IPR052192">
    <property type="entry name" value="Insect_Ionotropic_Sensory_Rcpt"/>
</dbReference>
<dbReference type="InterPro" id="IPR001320">
    <property type="entry name" value="Iontro_rcpt_C"/>
</dbReference>
<dbReference type="PANTHER" id="PTHR42643">
    <property type="entry name" value="IONOTROPIC RECEPTOR 20A-RELATED"/>
    <property type="match status" value="1"/>
</dbReference>
<dbReference type="PANTHER" id="PTHR42643:SF30">
    <property type="entry name" value="IONOTROPIC RECEPTOR 40A-RELATED"/>
    <property type="match status" value="1"/>
</dbReference>
<dbReference type="Pfam" id="PF00060">
    <property type="entry name" value="Lig_chan"/>
    <property type="match status" value="1"/>
</dbReference>
<dbReference type="SUPFAM" id="SSF53850">
    <property type="entry name" value="Periplasmic binding protein-like II"/>
    <property type="match status" value="1"/>
</dbReference>
<organism evidence="9">
    <name type="scientific">Drosophila melanogaster</name>
    <name type="common">Fruit fly</name>
    <dbReference type="NCBI Taxonomy" id="7227"/>
    <lineage>
        <taxon>Eukaryota</taxon>
        <taxon>Metazoa</taxon>
        <taxon>Ecdysozoa</taxon>
        <taxon>Arthropoda</taxon>
        <taxon>Hexapoda</taxon>
        <taxon>Insecta</taxon>
        <taxon>Pterygota</taxon>
        <taxon>Neoptera</taxon>
        <taxon>Endopterygota</taxon>
        <taxon>Diptera</taxon>
        <taxon>Brachycera</taxon>
        <taxon>Muscomorpha</taxon>
        <taxon>Ephydroidea</taxon>
        <taxon>Drosophilidae</taxon>
        <taxon>Drosophila</taxon>
        <taxon>Sophophora</taxon>
    </lineage>
</organism>
<accession>Q9V9N1</accession>
<accession>B3DNK0</accession>
<sequence length="732" mass="84084">MHKFLALGLLPYLLGLLNSTRLTFIGNDESDTAIALTQIVRGLQQSSLAILALPSLALSDGVCQKERNVYLDDFLQRLHRSNYKSVVFSQTELFFQHIEENLQGANECISLILDEPNQLLNSLHDRHLGHRLSLFIFYWGARWPPSSRVIRFREPLRVVVVTRPRKKAFRIYYNQARPCSDSQLQLVNWYDGDNLGLQRIPLLPTALSVYANFKGRTFRVPVFHSPPWFWVTYCNNSFEEDEEFNSLDSIEKRKVRVTGGRDHRLLMLLSKHMNFRFKYIEAPGRTQGSMRSEDGKDSNDSFTGGIGLLQSGQADFFLGDVGLSWERRKAIEFSFFTLADSGAFATHAPRRLNEALAIMRPFKQDIWPHLILTIIFSGPIFYGIIALPYIWRRRWANSDVEHLGELYIHMTYLKEITPRLLKLKPRTVLSAHQMPHQLFQKCIWFTLRLFLKQSCNELHNGYRAKFLTIVYWIAATYVLADVYSAQLTSQFARPAREPPINTLQRLQAAMIHDGYRLYVEKESSSLEMLENGTELFRQLYALMRQQVINDPQGFFIDSVEAGIKLIAEGGEDKAVLGGRETLFFNVQQYGSNNFQLSQKLYTRYSAVAVQIGCPFLGSLNNVLMQLFESGILDKMTAAEYAKQYQEVEATRIYKGSVQAKNSEAYSRTESYDSTVISPLNLRMLQGAFIALGVGSLAAGVILLLEIVFIKLDQARLWMLCSRLQWIRYDRKV</sequence>
<evidence type="ECO:0000255" key="1"/>
<evidence type="ECO:0000255" key="2">
    <source>
        <dbReference type="PROSITE-ProRule" id="PRU00498"/>
    </source>
</evidence>
<evidence type="ECO:0000269" key="3">
    <source>
    </source>
</evidence>
<evidence type="ECO:0000269" key="4">
    <source>
    </source>
</evidence>
<evidence type="ECO:0000303" key="5">
    <source>
    </source>
</evidence>
<evidence type="ECO:0000305" key="6"/>
<evidence type="ECO:0000312" key="7">
    <source>
        <dbReference type="EMBL" id="ACD99552.1"/>
    </source>
</evidence>
<evidence type="ECO:0000312" key="8">
    <source>
        <dbReference type="FlyBase" id="FBgn0259683"/>
    </source>
</evidence>
<evidence type="ECO:0000312" key="9">
    <source>
        <dbReference type="Proteomes" id="UP000000803"/>
    </source>
</evidence>
<feature type="signal peptide" evidence="1">
    <location>
        <begin position="1"/>
        <end position="19"/>
    </location>
</feature>
<feature type="chain" id="PRO_5004334452" description="Ionotropic receptor 40a" evidence="1">
    <location>
        <begin position="20"/>
        <end position="732"/>
    </location>
</feature>
<feature type="topological domain" description="Extracellular" evidence="6">
    <location>
        <begin position="20"/>
        <end position="369"/>
    </location>
</feature>
<feature type="transmembrane region" description="Helical" evidence="1">
    <location>
        <begin position="370"/>
        <end position="390"/>
    </location>
</feature>
<feature type="topological domain" description="Cytoplasmic" evidence="6">
    <location>
        <begin position="391"/>
        <end position="465"/>
    </location>
</feature>
<feature type="transmembrane region" description="Helical" evidence="1">
    <location>
        <begin position="466"/>
        <end position="486"/>
    </location>
</feature>
<feature type="topological domain" description="Extracellular" evidence="6">
    <location>
        <begin position="487"/>
        <end position="688"/>
    </location>
</feature>
<feature type="transmembrane region" description="Helical" evidence="1">
    <location>
        <begin position="689"/>
        <end position="709"/>
    </location>
</feature>
<feature type="topological domain" description="Cytoplasmic" evidence="6">
    <location>
        <begin position="710"/>
        <end position="732"/>
    </location>
</feature>
<feature type="glycosylation site" description="N-linked (GlcNAc...) asparagine" evidence="2">
    <location>
        <position position="18"/>
    </location>
</feature>
<feature type="glycosylation site" description="N-linked (GlcNAc...) asparagine" evidence="2">
    <location>
        <position position="235"/>
    </location>
</feature>
<feature type="glycosylation site" description="N-linked (GlcNAc...) asparagine" evidence="2">
    <location>
        <position position="299"/>
    </location>
</feature>
<feature type="glycosylation site" description="N-linked (GlcNAc...) asparagine" evidence="2">
    <location>
        <position position="531"/>
    </location>
</feature>
<reference evidence="9" key="1">
    <citation type="journal article" date="2000" name="Science">
        <title>The genome sequence of Drosophila melanogaster.</title>
        <authorList>
            <person name="Adams M.D."/>
            <person name="Celniker S.E."/>
            <person name="Holt R.A."/>
            <person name="Evans C.A."/>
            <person name="Gocayne J.D."/>
            <person name="Amanatides P.G."/>
            <person name="Scherer S.E."/>
            <person name="Li P.W."/>
            <person name="Hoskins R.A."/>
            <person name="Galle R.F."/>
            <person name="George R.A."/>
            <person name="Lewis S.E."/>
            <person name="Richards S."/>
            <person name="Ashburner M."/>
            <person name="Henderson S.N."/>
            <person name="Sutton G.G."/>
            <person name="Wortman J.R."/>
            <person name="Yandell M.D."/>
            <person name="Zhang Q."/>
            <person name="Chen L.X."/>
            <person name="Brandon R.C."/>
            <person name="Rogers Y.-H.C."/>
            <person name="Blazej R.G."/>
            <person name="Champe M."/>
            <person name="Pfeiffer B.D."/>
            <person name="Wan K.H."/>
            <person name="Doyle C."/>
            <person name="Baxter E.G."/>
            <person name="Helt G."/>
            <person name="Nelson C.R."/>
            <person name="Miklos G.L.G."/>
            <person name="Abril J.F."/>
            <person name="Agbayani A."/>
            <person name="An H.-J."/>
            <person name="Andrews-Pfannkoch C."/>
            <person name="Baldwin D."/>
            <person name="Ballew R.M."/>
            <person name="Basu A."/>
            <person name="Baxendale J."/>
            <person name="Bayraktaroglu L."/>
            <person name="Beasley E.M."/>
            <person name="Beeson K.Y."/>
            <person name="Benos P.V."/>
            <person name="Berman B.P."/>
            <person name="Bhandari D."/>
            <person name="Bolshakov S."/>
            <person name="Borkova D."/>
            <person name="Botchan M.R."/>
            <person name="Bouck J."/>
            <person name="Brokstein P."/>
            <person name="Brottier P."/>
            <person name="Burtis K.C."/>
            <person name="Busam D.A."/>
            <person name="Butler H."/>
            <person name="Cadieu E."/>
            <person name="Center A."/>
            <person name="Chandra I."/>
            <person name="Cherry J.M."/>
            <person name="Cawley S."/>
            <person name="Dahlke C."/>
            <person name="Davenport L.B."/>
            <person name="Davies P."/>
            <person name="de Pablos B."/>
            <person name="Delcher A."/>
            <person name="Deng Z."/>
            <person name="Mays A.D."/>
            <person name="Dew I."/>
            <person name="Dietz S.M."/>
            <person name="Dodson K."/>
            <person name="Doup L.E."/>
            <person name="Downes M."/>
            <person name="Dugan-Rocha S."/>
            <person name="Dunkov B.C."/>
            <person name="Dunn P."/>
            <person name="Durbin K.J."/>
            <person name="Evangelista C.C."/>
            <person name="Ferraz C."/>
            <person name="Ferriera S."/>
            <person name="Fleischmann W."/>
            <person name="Fosler C."/>
            <person name="Gabrielian A.E."/>
            <person name="Garg N.S."/>
            <person name="Gelbart W.M."/>
            <person name="Glasser K."/>
            <person name="Glodek A."/>
            <person name="Gong F."/>
            <person name="Gorrell J.H."/>
            <person name="Gu Z."/>
            <person name="Guan P."/>
            <person name="Harris M."/>
            <person name="Harris N.L."/>
            <person name="Harvey D.A."/>
            <person name="Heiman T.J."/>
            <person name="Hernandez J.R."/>
            <person name="Houck J."/>
            <person name="Hostin D."/>
            <person name="Houston K.A."/>
            <person name="Howland T.J."/>
            <person name="Wei M.-H."/>
            <person name="Ibegwam C."/>
            <person name="Jalali M."/>
            <person name="Kalush F."/>
            <person name="Karpen G.H."/>
            <person name="Ke Z."/>
            <person name="Kennison J.A."/>
            <person name="Ketchum K.A."/>
            <person name="Kimmel B.E."/>
            <person name="Kodira C.D."/>
            <person name="Kraft C.L."/>
            <person name="Kravitz S."/>
            <person name="Kulp D."/>
            <person name="Lai Z."/>
            <person name="Lasko P."/>
            <person name="Lei Y."/>
            <person name="Levitsky A.A."/>
            <person name="Li J.H."/>
            <person name="Li Z."/>
            <person name="Liang Y."/>
            <person name="Lin X."/>
            <person name="Liu X."/>
            <person name="Mattei B."/>
            <person name="McIntosh T.C."/>
            <person name="McLeod M.P."/>
            <person name="McPherson D."/>
            <person name="Merkulov G."/>
            <person name="Milshina N.V."/>
            <person name="Mobarry C."/>
            <person name="Morris J."/>
            <person name="Moshrefi A."/>
            <person name="Mount S.M."/>
            <person name="Moy M."/>
            <person name="Murphy B."/>
            <person name="Murphy L."/>
            <person name="Muzny D.M."/>
            <person name="Nelson D.L."/>
            <person name="Nelson D.R."/>
            <person name="Nelson K.A."/>
            <person name="Nixon K."/>
            <person name="Nusskern D.R."/>
            <person name="Pacleb J.M."/>
            <person name="Palazzolo M."/>
            <person name="Pittman G.S."/>
            <person name="Pan S."/>
            <person name="Pollard J."/>
            <person name="Puri V."/>
            <person name="Reese M.G."/>
            <person name="Reinert K."/>
            <person name="Remington K."/>
            <person name="Saunders R.D.C."/>
            <person name="Scheeler F."/>
            <person name="Shen H."/>
            <person name="Shue B.C."/>
            <person name="Siden-Kiamos I."/>
            <person name="Simpson M."/>
            <person name="Skupski M.P."/>
            <person name="Smith T.J."/>
            <person name="Spier E."/>
            <person name="Spradling A.C."/>
            <person name="Stapleton M."/>
            <person name="Strong R."/>
            <person name="Sun E."/>
            <person name="Svirskas R."/>
            <person name="Tector C."/>
            <person name="Turner R."/>
            <person name="Venter E."/>
            <person name="Wang A.H."/>
            <person name="Wang X."/>
            <person name="Wang Z.-Y."/>
            <person name="Wassarman D.A."/>
            <person name="Weinstock G.M."/>
            <person name="Weissenbach J."/>
            <person name="Williams S.M."/>
            <person name="Woodage T."/>
            <person name="Worley K.C."/>
            <person name="Wu D."/>
            <person name="Yang S."/>
            <person name="Yao Q.A."/>
            <person name="Ye J."/>
            <person name="Yeh R.-F."/>
            <person name="Zaveri J.S."/>
            <person name="Zhan M."/>
            <person name="Zhang G."/>
            <person name="Zhao Q."/>
            <person name="Zheng L."/>
            <person name="Zheng X.H."/>
            <person name="Zhong F.N."/>
            <person name="Zhong W."/>
            <person name="Zhou X."/>
            <person name="Zhu S.C."/>
            <person name="Zhu X."/>
            <person name="Smith H.O."/>
            <person name="Gibbs R.A."/>
            <person name="Myers E.W."/>
            <person name="Rubin G.M."/>
            <person name="Venter J.C."/>
        </authorList>
    </citation>
    <scope>NUCLEOTIDE SEQUENCE [LARGE SCALE GENOMIC DNA]</scope>
    <source>
        <strain evidence="9">Berkeley</strain>
    </source>
</reference>
<reference evidence="9" key="2">
    <citation type="journal article" date="2002" name="Genome Biol.">
        <title>Annotation of the Drosophila melanogaster euchromatic genome: a systematic review.</title>
        <authorList>
            <person name="Misra S."/>
            <person name="Crosby M.A."/>
            <person name="Mungall C.J."/>
            <person name="Matthews B.B."/>
            <person name="Campbell K.S."/>
            <person name="Hradecky P."/>
            <person name="Huang Y."/>
            <person name="Kaminker J.S."/>
            <person name="Millburn G.H."/>
            <person name="Prochnik S.E."/>
            <person name="Smith C.D."/>
            <person name="Tupy J.L."/>
            <person name="Whitfield E.J."/>
            <person name="Bayraktaroglu L."/>
            <person name="Berman B.P."/>
            <person name="Bettencourt B.R."/>
            <person name="Celniker S.E."/>
            <person name="de Grey A.D.N.J."/>
            <person name="Drysdale R.A."/>
            <person name="Harris N.L."/>
            <person name="Richter J."/>
            <person name="Russo S."/>
            <person name="Schroeder A.J."/>
            <person name="Shu S.Q."/>
            <person name="Stapleton M."/>
            <person name="Yamada C."/>
            <person name="Ashburner M."/>
            <person name="Gelbart W.M."/>
            <person name="Rubin G.M."/>
            <person name="Lewis S.E."/>
        </authorList>
    </citation>
    <scope>GENOME REANNOTATION</scope>
    <source>
        <strain evidence="9">Berkeley</strain>
    </source>
</reference>
<reference evidence="7" key="3">
    <citation type="submission" date="2008-06" db="EMBL/GenBank/DDBJ databases">
        <authorList>
            <person name="Carlson J."/>
            <person name="Booth B."/>
            <person name="Frise E."/>
            <person name="Park S."/>
            <person name="Wan K."/>
            <person name="Yu C."/>
            <person name="Celniker S."/>
        </authorList>
    </citation>
    <scope>NUCLEOTIDE SEQUENCE [LARGE SCALE MRNA] OF 460-732</scope>
</reference>
<reference evidence="6" key="4">
    <citation type="journal article" date="2016" name="Curr. Biol.">
        <title>Humidity Sensing in Drosophila.</title>
        <authorList>
            <person name="Enjin A."/>
            <person name="Zaharieva E.E."/>
            <person name="Frank D.D."/>
            <person name="Mansourian S."/>
            <person name="Suh G.S."/>
            <person name="Gallio M."/>
            <person name="Stensmyr M.C."/>
        </authorList>
    </citation>
    <scope>FUNCTION</scope>
    <scope>DISRUPTION PHENOTYPE</scope>
</reference>
<reference evidence="6" key="5">
    <citation type="journal article" date="2016" name="Elife">
        <title>Distinct combinations of variant ionotropic glutamate receptors mediate thermosensation and hygrosensation in Drosophila.</title>
        <authorList>
            <person name="Knecht Z.A."/>
            <person name="Silbering A.F."/>
            <person name="Ni L."/>
            <person name="Klein M."/>
            <person name="Budelli G."/>
            <person name="Bell R."/>
            <person name="Abuin L."/>
            <person name="Ferrer A.J."/>
            <person name="Samuel A.D."/>
            <person name="Benton R."/>
            <person name="Garrity P.A."/>
        </authorList>
    </citation>
    <scope>FUNCTION</scope>
    <scope>TISSUE SPECIFICITY</scope>
    <scope>DISRUPTION PHENOTYPE</scope>
</reference>
<name>IR40A_DROME</name>
<protein>
    <recommendedName>
        <fullName evidence="5">Ionotropic receptor 40a</fullName>
    </recommendedName>
</protein>
<proteinExistence type="evidence at protein level"/>